<comment type="function">
    <text evidence="2 3">Cationic peptide that possesses multiple functions. It acts as a cell-penetrating peptide (CPP), and as a potent voltage-gated potassium channel (Kv) inhibitor. It exhibits antimicrobial activities, and hind limb paralysis (By similarity). It also induces potent blockade of neuromuscular transmission in young chicken biventer cervicis preparation and potent myotoxic effect. In vivo, induces myonecrosis, upon intramuscular or subcutaneous injections into mice (PubMed:17828447).</text>
</comment>
<comment type="subunit">
    <text evidence="1">Monomer.</text>
</comment>
<comment type="subcellular location">
    <subcellularLocation>
        <location evidence="3">Secreted</location>
    </subcellularLocation>
</comment>
<comment type="tissue specificity">
    <text evidence="6">Expressed by the venom gland.</text>
</comment>
<comment type="mass spectrometry"/>
<comment type="toxic dose">
    <text evidence="3">LD(50) is 0.07 mg/kg by intracerebroventricular injection into mice.</text>
</comment>
<comment type="similarity">
    <text evidence="5">Belongs to the crotamine-myotoxin family.</text>
</comment>
<name>MYXC2_CRODM</name>
<evidence type="ECO:0000250" key="1"/>
<evidence type="ECO:0000250" key="2">
    <source>
        <dbReference type="UniProtKB" id="Q9PWF3"/>
    </source>
</evidence>
<evidence type="ECO:0000269" key="3">
    <source>
    </source>
</evidence>
<evidence type="ECO:0000303" key="4">
    <source>
    </source>
</evidence>
<evidence type="ECO:0000305" key="5"/>
<evidence type="ECO:0000305" key="6">
    <source>
    </source>
</evidence>
<keyword id="KW-0929">Antimicrobial</keyword>
<keyword id="KW-0903">Direct protein sequencing</keyword>
<keyword id="KW-1015">Disulfide bond</keyword>
<keyword id="KW-0872">Ion channel impairing toxin</keyword>
<keyword id="KW-0959">Myotoxin</keyword>
<keyword id="KW-0528">Neurotoxin</keyword>
<keyword id="KW-0632">Potassium channel impairing toxin</keyword>
<keyword id="KW-0964">Secreted</keyword>
<keyword id="KW-0800">Toxin</keyword>
<keyword id="KW-1220">Voltage-gated potassium channel impairing toxin</keyword>
<feature type="chain" id="PRO_0000371460" description="Crotamine-IV-2" evidence="3">
    <location>
        <begin position="1"/>
        <end position="42"/>
    </location>
</feature>
<feature type="disulfide bond" evidence="2">
    <location>
        <begin position="4"/>
        <end position="37"/>
    </location>
</feature>
<feature type="disulfide bond" evidence="2">
    <location>
        <begin position="11"/>
        <end position="31"/>
    </location>
</feature>
<feature type="disulfide bond" evidence="2">
    <location>
        <begin position="19"/>
        <end position="38"/>
    </location>
</feature>
<protein>
    <recommendedName>
        <fullName evidence="4">Crotamine-IV-2</fullName>
    </recommendedName>
</protein>
<sequence>YKRCHIKGGHCFPKEKLICIPPSSDIGKMDCPWKRKCCKKRS</sequence>
<proteinExistence type="evidence at protein level"/>
<reference key="1">
    <citation type="journal article" date="2007" name="Protein J.">
        <title>Structural and biological characterization of two crotamine isoforms IV-2 and IV-3 isolated from the Crotalus durissus cumanensis venom.</title>
        <authorList>
            <person name="Ponce-Soto L.A."/>
            <person name="Martins D."/>
            <person name="Novello J.C."/>
            <person name="Marangoni S."/>
        </authorList>
    </citation>
    <scope>PROTEIN SEQUENCE</scope>
    <scope>FUNCTION</scope>
    <scope>MASS SPECTROMETRY</scope>
    <scope>TOXIC DOSE</scope>
    <scope>SUBCELLULAR LOCATION</scope>
    <source>
        <tissue>Venom</tissue>
    </source>
</reference>
<dbReference type="SMR" id="P86193"/>
<dbReference type="TCDB" id="1.C.85.2.2">
    <property type="family name" value="the pore-forming Beta-defensin (Beta-defensin) family"/>
</dbReference>
<dbReference type="GO" id="GO:0005576">
    <property type="term" value="C:extracellular region"/>
    <property type="evidence" value="ECO:0000314"/>
    <property type="project" value="UniProtKB"/>
</dbReference>
<dbReference type="GO" id="GO:0015459">
    <property type="term" value="F:potassium channel regulator activity"/>
    <property type="evidence" value="ECO:0007669"/>
    <property type="project" value="UniProtKB-KW"/>
</dbReference>
<dbReference type="GO" id="GO:0090729">
    <property type="term" value="F:toxin activity"/>
    <property type="evidence" value="ECO:0000314"/>
    <property type="project" value="UniProtKB"/>
</dbReference>
<dbReference type="GO" id="GO:0044564">
    <property type="term" value="P:envenomation resulting in occlusion of the pore of voltage-gated potassium channel in another organism"/>
    <property type="evidence" value="ECO:0000250"/>
    <property type="project" value="UniProtKB"/>
</dbReference>
<dbReference type="GO" id="GO:0044521">
    <property type="term" value="P:venom-mediated muscle damage in another organism"/>
    <property type="evidence" value="ECO:0000314"/>
    <property type="project" value="UniProtKB"/>
</dbReference>
<dbReference type="GO" id="GO:0044522">
    <property type="term" value="P:venom-mediated myocyte killing in another organism"/>
    <property type="evidence" value="ECO:0000314"/>
    <property type="project" value="UniProtKB"/>
</dbReference>
<dbReference type="Gene3D" id="2.20.20.10">
    <property type="entry name" value="Anthopleurin-A"/>
    <property type="match status" value="1"/>
</dbReference>
<dbReference type="InterPro" id="IPR023355">
    <property type="entry name" value="Myo_ane_neurotoxin_sf"/>
</dbReference>
<dbReference type="InterPro" id="IPR000881">
    <property type="entry name" value="Myotoxin"/>
</dbReference>
<dbReference type="Pfam" id="PF00819">
    <property type="entry name" value="Myotoxins"/>
    <property type="match status" value="1"/>
</dbReference>
<dbReference type="PRINTS" id="PR00283">
    <property type="entry name" value="MYOTOXIN"/>
</dbReference>
<dbReference type="SUPFAM" id="SSF57392">
    <property type="entry name" value="Defensin-like"/>
    <property type="match status" value="1"/>
</dbReference>
<dbReference type="PROSITE" id="PS51345">
    <property type="entry name" value="MYOTOXINS_2"/>
    <property type="match status" value="1"/>
</dbReference>
<accession>P86193</accession>
<organism>
    <name type="scientific">Crotalus durissus cumanensis</name>
    <name type="common">South American rattlesnake</name>
    <dbReference type="NCBI Taxonomy" id="184542"/>
    <lineage>
        <taxon>Eukaryota</taxon>
        <taxon>Metazoa</taxon>
        <taxon>Chordata</taxon>
        <taxon>Craniata</taxon>
        <taxon>Vertebrata</taxon>
        <taxon>Euteleostomi</taxon>
        <taxon>Lepidosauria</taxon>
        <taxon>Squamata</taxon>
        <taxon>Bifurcata</taxon>
        <taxon>Unidentata</taxon>
        <taxon>Episquamata</taxon>
        <taxon>Toxicofera</taxon>
        <taxon>Serpentes</taxon>
        <taxon>Colubroidea</taxon>
        <taxon>Viperidae</taxon>
        <taxon>Crotalinae</taxon>
        <taxon>Crotalus</taxon>
    </lineage>
</organism>